<dbReference type="EMBL" id="AK049209">
    <property type="protein sequence ID" value="BAC33611.1"/>
    <property type="molecule type" value="mRNA"/>
</dbReference>
<dbReference type="EMBL" id="AK220496">
    <property type="protein sequence ID" value="BAD90294.1"/>
    <property type="status" value="ALT_INIT"/>
    <property type="molecule type" value="mRNA"/>
</dbReference>
<dbReference type="EMBL" id="AL805897">
    <property type="protein sequence ID" value="CAM26521.1"/>
    <property type="molecule type" value="Genomic_DNA"/>
</dbReference>
<dbReference type="EMBL" id="AL805897">
    <property type="protein sequence ID" value="CAM26523.1"/>
    <property type="molecule type" value="Genomic_DNA"/>
</dbReference>
<dbReference type="EMBL" id="AL805897">
    <property type="protein sequence ID" value="CAM26520.1"/>
    <property type="status" value="ALT_SEQ"/>
    <property type="molecule type" value="Genomic_DNA"/>
</dbReference>
<dbReference type="EMBL" id="BC075672">
    <property type="protein sequence ID" value="AAH75672.1"/>
    <property type="molecule type" value="mRNA"/>
</dbReference>
<dbReference type="EMBL" id="BC096033">
    <property type="protein sequence ID" value="AAH96033.1"/>
    <property type="molecule type" value="mRNA"/>
</dbReference>
<dbReference type="CCDS" id="CCDS18724.1">
    <molecule id="Q501J7-1"/>
</dbReference>
<dbReference type="CCDS" id="CCDS51318.1">
    <molecule id="Q501J7-2"/>
</dbReference>
<dbReference type="RefSeq" id="NP_001155269.1">
    <molecule id="Q501J7-2"/>
    <property type="nucleotide sequence ID" value="NM_001161797.2"/>
</dbReference>
<dbReference type="RefSeq" id="NP_780515.2">
    <molecule id="Q501J7-1"/>
    <property type="nucleotide sequence ID" value="NM_175306.5"/>
</dbReference>
<dbReference type="RefSeq" id="XP_006538519.1">
    <molecule id="Q501J7-3"/>
    <property type="nucleotide sequence ID" value="XM_006538456.5"/>
</dbReference>
<dbReference type="SMR" id="Q501J7"/>
<dbReference type="BioGRID" id="221393">
    <property type="interactions" value="4"/>
</dbReference>
<dbReference type="FunCoup" id="Q501J7">
    <property type="interactions" value="476"/>
</dbReference>
<dbReference type="STRING" id="10090.ENSMUSP00000099628"/>
<dbReference type="GlyGen" id="Q501J7">
    <property type="glycosylation" value="14 sites, 1 O-linked glycan (11 sites)"/>
</dbReference>
<dbReference type="iPTMnet" id="Q501J7"/>
<dbReference type="PhosphoSitePlus" id="Q501J7"/>
<dbReference type="SwissPalm" id="Q501J7"/>
<dbReference type="jPOST" id="Q501J7"/>
<dbReference type="PaxDb" id="10090-ENSMUSP00000099628"/>
<dbReference type="PeptideAtlas" id="Q501J7"/>
<dbReference type="ProteomicsDB" id="288137">
    <molecule id="Q501J7-1"/>
</dbReference>
<dbReference type="ProteomicsDB" id="288138">
    <molecule id="Q501J7-2"/>
</dbReference>
<dbReference type="ProteomicsDB" id="288139">
    <molecule id="Q501J7-3"/>
</dbReference>
<dbReference type="Pumba" id="Q501J7"/>
<dbReference type="Antibodypedia" id="30935">
    <property type="antibodies" value="122 antibodies from 27 providers"/>
</dbReference>
<dbReference type="Ensembl" id="ENSMUST00000084170.12">
    <molecule id="Q501J7-2"/>
    <property type="protein sequence ID" value="ENSMUSP00000081185.6"/>
    <property type="gene ID" value="ENSMUSG00000066043.14"/>
</dbReference>
<dbReference type="Ensembl" id="ENSMUST00000084249.11">
    <molecule id="Q501J7-3"/>
    <property type="protein sequence ID" value="ENSMUSP00000081270.5"/>
    <property type="gene ID" value="ENSMUSG00000066043.14"/>
</dbReference>
<dbReference type="Ensembl" id="ENSMUST00000102568.10">
    <molecule id="Q501J7-1"/>
    <property type="protein sequence ID" value="ENSMUSP00000099628.4"/>
    <property type="gene ID" value="ENSMUSG00000066043.14"/>
</dbReference>
<dbReference type="GeneID" id="100169"/>
<dbReference type="KEGG" id="mmu:100169"/>
<dbReference type="UCSC" id="uc008vbg.3">
    <molecule id="Q501J7-1"/>
    <property type="organism name" value="mouse"/>
</dbReference>
<dbReference type="UCSC" id="uc008vbh.3">
    <molecule id="Q501J7-2"/>
    <property type="organism name" value="mouse"/>
</dbReference>
<dbReference type="AGR" id="MGI:2140327"/>
<dbReference type="CTD" id="65979"/>
<dbReference type="MGI" id="MGI:2140327">
    <property type="gene designation" value="Phactr4"/>
</dbReference>
<dbReference type="VEuPathDB" id="HostDB:ENSMUSG00000066043"/>
<dbReference type="eggNOG" id="KOG4339">
    <property type="taxonomic scope" value="Eukaryota"/>
</dbReference>
<dbReference type="GeneTree" id="ENSGT00940000157582"/>
<dbReference type="HOGENOM" id="CLU_015753_1_1_1"/>
<dbReference type="InParanoid" id="Q501J7"/>
<dbReference type="OMA" id="TMNRSPR"/>
<dbReference type="OrthoDB" id="88280at9989"/>
<dbReference type="PhylomeDB" id="Q501J7"/>
<dbReference type="TreeFam" id="TF316316"/>
<dbReference type="BioGRID-ORCS" id="100169">
    <property type="hits" value="0 hits in 77 CRISPR screens"/>
</dbReference>
<dbReference type="ChiTaRS" id="Phactr4">
    <property type="organism name" value="mouse"/>
</dbReference>
<dbReference type="PRO" id="PR:Q501J7"/>
<dbReference type="Proteomes" id="UP000000589">
    <property type="component" value="Chromosome 4"/>
</dbReference>
<dbReference type="RNAct" id="Q501J7">
    <property type="molecule type" value="protein"/>
</dbReference>
<dbReference type="Bgee" id="ENSMUSG00000066043">
    <property type="expression patterns" value="Expressed in paneth cell and 203 other cell types or tissues"/>
</dbReference>
<dbReference type="ExpressionAtlas" id="Q501J7">
    <property type="expression patterns" value="baseline and differential"/>
</dbReference>
<dbReference type="GO" id="GO:0005737">
    <property type="term" value="C:cytoplasm"/>
    <property type="evidence" value="ECO:0007669"/>
    <property type="project" value="UniProtKB-SubCell"/>
</dbReference>
<dbReference type="GO" id="GO:0030027">
    <property type="term" value="C:lamellipodium"/>
    <property type="evidence" value="ECO:0000314"/>
    <property type="project" value="UniProtKB"/>
</dbReference>
<dbReference type="GO" id="GO:0003779">
    <property type="term" value="F:actin binding"/>
    <property type="evidence" value="ECO:0000314"/>
    <property type="project" value="UniProtKB"/>
</dbReference>
<dbReference type="GO" id="GO:0008157">
    <property type="term" value="F:protein phosphatase 1 binding"/>
    <property type="evidence" value="ECO:0000314"/>
    <property type="project" value="UniProtKB"/>
</dbReference>
<dbReference type="GO" id="GO:0072542">
    <property type="term" value="F:protein phosphatase activator activity"/>
    <property type="evidence" value="ECO:0000314"/>
    <property type="project" value="UniProtKB"/>
</dbReference>
<dbReference type="GO" id="GO:0004864">
    <property type="term" value="F:protein phosphatase inhibitor activity"/>
    <property type="evidence" value="ECO:0007669"/>
    <property type="project" value="UniProtKB-KW"/>
</dbReference>
<dbReference type="GO" id="GO:0030036">
    <property type="term" value="P:actin cytoskeleton organization"/>
    <property type="evidence" value="ECO:0000315"/>
    <property type="project" value="UniProtKB"/>
</dbReference>
<dbReference type="GO" id="GO:0061386">
    <property type="term" value="P:closure of optic fissure"/>
    <property type="evidence" value="ECO:0000315"/>
    <property type="project" value="UniProtKB"/>
</dbReference>
<dbReference type="GO" id="GO:0048484">
    <property type="term" value="P:enteric nervous system development"/>
    <property type="evidence" value="ECO:0000315"/>
    <property type="project" value="UniProtKB"/>
</dbReference>
<dbReference type="GO" id="GO:2001045">
    <property type="term" value="P:negative regulation of integrin-mediated signaling pathway"/>
    <property type="evidence" value="ECO:0000315"/>
    <property type="project" value="UniProtKB"/>
</dbReference>
<dbReference type="GO" id="GO:0001755">
    <property type="term" value="P:neural crest cell migration"/>
    <property type="evidence" value="ECO:0000315"/>
    <property type="project" value="UniProtKB"/>
</dbReference>
<dbReference type="GO" id="GO:0001843">
    <property type="term" value="P:neural tube closure"/>
    <property type="evidence" value="ECO:0000315"/>
    <property type="project" value="UniProtKB"/>
</dbReference>
<dbReference type="GO" id="GO:0043085">
    <property type="term" value="P:positive regulation of catalytic activity"/>
    <property type="evidence" value="ECO:0000314"/>
    <property type="project" value="UniProtKB"/>
</dbReference>
<dbReference type="GO" id="GO:0051726">
    <property type="term" value="P:regulation of cell cycle"/>
    <property type="evidence" value="ECO:0000315"/>
    <property type="project" value="UniProtKB"/>
</dbReference>
<dbReference type="GO" id="GO:0007266">
    <property type="term" value="P:Rho protein signal transduction"/>
    <property type="evidence" value="ECO:0000315"/>
    <property type="project" value="UniProtKB"/>
</dbReference>
<dbReference type="Gene3D" id="6.10.140.1750">
    <property type="match status" value="1"/>
</dbReference>
<dbReference type="Gene3D" id="6.10.140.2130">
    <property type="match status" value="1"/>
</dbReference>
<dbReference type="InterPro" id="IPR004018">
    <property type="entry name" value="RPEL_repeat"/>
</dbReference>
<dbReference type="PANTHER" id="PTHR12751:SF4">
    <property type="entry name" value="PHOSPHATASE AND ACTIN REGULATOR 4"/>
    <property type="match status" value="1"/>
</dbReference>
<dbReference type="PANTHER" id="PTHR12751">
    <property type="entry name" value="PHOSPHATASE AND ACTIN REGULATOR PHACTR"/>
    <property type="match status" value="1"/>
</dbReference>
<dbReference type="Pfam" id="PF02755">
    <property type="entry name" value="RPEL"/>
    <property type="match status" value="3"/>
</dbReference>
<dbReference type="SMART" id="SM00707">
    <property type="entry name" value="RPEL"/>
    <property type="match status" value="3"/>
</dbReference>
<dbReference type="PROSITE" id="PS51073">
    <property type="entry name" value="RPEL"/>
    <property type="match status" value="3"/>
</dbReference>
<keyword id="KW-0009">Actin-binding</keyword>
<keyword id="KW-0025">Alternative splicing</keyword>
<keyword id="KW-0966">Cell projection</keyword>
<keyword id="KW-0963">Cytoplasm</keyword>
<keyword id="KW-0217">Developmental protein</keyword>
<keyword id="KW-0524">Neurogenesis</keyword>
<keyword id="KW-0597">Phosphoprotein</keyword>
<keyword id="KW-0650">Protein phosphatase inhibitor</keyword>
<keyword id="KW-1185">Reference proteome</keyword>
<keyword id="KW-0677">Repeat</keyword>
<feature type="chain" id="PRO_0000287307" description="Phosphatase and actin regulator 4">
    <location>
        <begin position="1"/>
        <end position="694"/>
    </location>
</feature>
<feature type="repeat" description="RPEL 1">
    <location>
        <begin position="63"/>
        <end position="88"/>
    </location>
</feature>
<feature type="repeat" description="RPEL 2">
    <location>
        <begin position="575"/>
        <end position="600"/>
    </location>
</feature>
<feature type="repeat" description="RPEL 3">
    <location>
        <begin position="613"/>
        <end position="638"/>
    </location>
</feature>
<feature type="region of interest" description="Disordered" evidence="2">
    <location>
        <begin position="1"/>
        <end position="354"/>
    </location>
</feature>
<feature type="region of interest" description="Disordered" evidence="2">
    <location>
        <begin position="375"/>
        <end position="405"/>
    </location>
</feature>
<feature type="region of interest" description="Disordered" evidence="2">
    <location>
        <begin position="467"/>
        <end position="562"/>
    </location>
</feature>
<feature type="region of interest" description="Disordered" evidence="2">
    <location>
        <begin position="589"/>
        <end position="608"/>
    </location>
</feature>
<feature type="compositionally biased region" description="Basic residues" evidence="2">
    <location>
        <begin position="45"/>
        <end position="54"/>
    </location>
</feature>
<feature type="compositionally biased region" description="Basic and acidic residues" evidence="2">
    <location>
        <begin position="55"/>
        <end position="84"/>
    </location>
</feature>
<feature type="compositionally biased region" description="Low complexity" evidence="2">
    <location>
        <begin position="184"/>
        <end position="209"/>
    </location>
</feature>
<feature type="compositionally biased region" description="Low complexity" evidence="2">
    <location>
        <begin position="231"/>
        <end position="249"/>
    </location>
</feature>
<feature type="compositionally biased region" description="Pro residues" evidence="2">
    <location>
        <begin position="250"/>
        <end position="259"/>
    </location>
</feature>
<feature type="compositionally biased region" description="Pro residues" evidence="2">
    <location>
        <begin position="329"/>
        <end position="352"/>
    </location>
</feature>
<feature type="compositionally biased region" description="Basic and acidic residues" evidence="2">
    <location>
        <begin position="381"/>
        <end position="392"/>
    </location>
</feature>
<feature type="compositionally biased region" description="Polar residues" evidence="2">
    <location>
        <begin position="546"/>
        <end position="559"/>
    </location>
</feature>
<feature type="modified residue" description="Phosphoserine" evidence="8">
    <location>
        <position position="116"/>
    </location>
</feature>
<feature type="modified residue" description="Phosphoserine" evidence="7 8">
    <location>
        <position position="118"/>
    </location>
</feature>
<feature type="modified residue" description="Phosphoserine" evidence="1">
    <location>
        <position position="129"/>
    </location>
</feature>
<feature type="modified residue" description="Phosphoserine" evidence="1">
    <location>
        <position position="145"/>
    </location>
</feature>
<feature type="modified residue" description="Phosphoserine" evidence="8">
    <location>
        <position position="264"/>
    </location>
</feature>
<feature type="modified residue" description="Phosphoserine" evidence="8">
    <location>
        <position position="285"/>
    </location>
</feature>
<feature type="modified residue" description="Phosphoserine" evidence="1">
    <location>
        <position position="335"/>
    </location>
</feature>
<feature type="modified residue" description="Phosphoserine" evidence="1">
    <location>
        <position position="337"/>
    </location>
</feature>
<feature type="modified residue" description="Phosphoserine" evidence="8">
    <location>
        <position position="420"/>
    </location>
</feature>
<feature type="modified residue" description="Phosphothreonine" evidence="8">
    <location>
        <position position="425"/>
    </location>
</feature>
<feature type="modified residue" description="Phosphoserine" evidence="7 8">
    <location>
        <position position="436"/>
    </location>
</feature>
<feature type="modified residue" description="Phosphoserine" evidence="8">
    <location>
        <position position="446"/>
    </location>
</feature>
<feature type="modified residue" description="Phosphoserine" evidence="8">
    <location>
        <position position="457"/>
    </location>
</feature>
<feature type="modified residue" description="Phosphoserine" evidence="8">
    <location>
        <position position="503"/>
    </location>
</feature>
<feature type="modified residue" description="Phosphoserine" evidence="8">
    <location>
        <position position="505"/>
    </location>
</feature>
<feature type="modified residue" description="Phosphoserine" evidence="1">
    <location>
        <position position="549"/>
    </location>
</feature>
<feature type="modified residue" description="Phosphoserine" evidence="1">
    <location>
        <position position="582"/>
    </location>
</feature>
<feature type="modified residue" description="Phosphoserine" evidence="1">
    <location>
        <position position="620"/>
    </location>
</feature>
<feature type="splice variant" id="VSP_025439" description="In isoform 3." evidence="6">
    <original>MEDPS</original>
    <variation>MGQADVSRPVNPDAV</variation>
    <location>
        <begin position="1"/>
        <end position="5"/>
    </location>
</feature>
<feature type="splice variant" id="VSP_025440" description="In isoform 2." evidence="5">
    <location>
        <begin position="64"/>
        <end position="90"/>
    </location>
</feature>
<feature type="mutagenesis site" description="In humdy; failure to close the neural tube and optic fissure, causing exencephaly and retinal coloboma and common birth defects. Specifically disrupts interaction with PPP1CA while it does not affect interaction with actin." evidence="3">
    <original>R</original>
    <variation>P</variation>
    <location>
        <position position="650"/>
    </location>
</feature>
<feature type="sequence conflict" description="In Ref. 1; BAC33611." evidence="6" ref="1">
    <original>T</original>
    <variation>K</variation>
    <location>
        <position position="212"/>
    </location>
</feature>
<feature type="sequence conflict" description="In Ref. 3; AAH96033." evidence="6" ref="3">
    <original>A</original>
    <variation>S</variation>
    <location>
        <position position="224"/>
    </location>
</feature>
<organism>
    <name type="scientific">Mus musculus</name>
    <name type="common">Mouse</name>
    <dbReference type="NCBI Taxonomy" id="10090"/>
    <lineage>
        <taxon>Eukaryota</taxon>
        <taxon>Metazoa</taxon>
        <taxon>Chordata</taxon>
        <taxon>Craniata</taxon>
        <taxon>Vertebrata</taxon>
        <taxon>Euteleostomi</taxon>
        <taxon>Mammalia</taxon>
        <taxon>Eutheria</taxon>
        <taxon>Euarchontoglires</taxon>
        <taxon>Glires</taxon>
        <taxon>Rodentia</taxon>
        <taxon>Myomorpha</taxon>
        <taxon>Muroidea</taxon>
        <taxon>Muridae</taxon>
        <taxon>Murinae</taxon>
        <taxon>Mus</taxon>
        <taxon>Mus</taxon>
    </lineage>
</organism>
<evidence type="ECO:0000250" key="1">
    <source>
        <dbReference type="UniProtKB" id="Q8IZ21"/>
    </source>
</evidence>
<evidence type="ECO:0000256" key="2">
    <source>
        <dbReference type="SAM" id="MobiDB-lite"/>
    </source>
</evidence>
<evidence type="ECO:0000269" key="3">
    <source>
    </source>
</evidence>
<evidence type="ECO:0000269" key="4">
    <source>
    </source>
</evidence>
<evidence type="ECO:0000303" key="5">
    <source ref="2"/>
</evidence>
<evidence type="ECO:0000305" key="6"/>
<evidence type="ECO:0007744" key="7">
    <source>
    </source>
</evidence>
<evidence type="ECO:0007744" key="8">
    <source>
    </source>
</evidence>
<accession>Q501J7</accession>
<accession>A2ALF7</accession>
<accession>A2ALG0</accession>
<accession>F6QNZ3</accession>
<accession>Q5DTM4</accession>
<accession>Q6DI97</accession>
<accession>Q8C7U9</accession>
<protein>
    <recommendedName>
        <fullName>Phosphatase and actin regulator 4</fullName>
    </recommendedName>
    <alternativeName>
        <fullName>Protein Humpty dumpty</fullName>
        <shortName>Humdy</shortName>
    </alternativeName>
</protein>
<name>PHAR4_MOUSE</name>
<sequence length="694" mass="76632">MEDPSEEAEQPSGDPGMGMDSVEAGDTTPPTKRKSKFSALGKIFKPWKWRKKKSSDKFKETSEVLERKISMRKPREELVKRGVLLEDPEQDGEDSGKLSHAALKNGHTTPIGSARSSSPVLVEEEPERSLRNLTPEEESKKRLGSTGSQPNSEAEPGPEHAPKQPLLPPKRPLSSSCEAKEVPAGSTARSVSSTSGSTTVTSAATTAATDMTKTVKSFVGPTPAPAPAPRTLPAAPASANTAATTTAPAKQPPIPPPKPAQRNSNPIIAELSQAMNSGTVLSKPSPPLPPKRGIPSTSIPSLEPAASFTTKTANDQREKTVSLCLEPPLIIPPSSPSPPLPTHIPPEPPRSPLVPAKTFQIVPEVEFSSSSDLFQDISQQEDQKTEVPKKIQDQSFGESHIPSRLPPLPLHIRIQQALTSPLPVTPPLEGTHRAHSLLFENSDSFSEDTGTLGRTRSLPITIEMLKVPDDEEEEQTCPFVEDVTSTSATPSLPLCLREEEKESDSDSEGPIKYRDEEEDDDDDESHQSALANRVKRKDTLAMKLSSRPSEPETNLNSWPRKSKEEWNEIRHQIGNTLIRRLSQRPTAEELEQRNILQPKNEADRQAEKREIKRRLTRKLSQRPTVAELLARKILRFNEYVEVTDAHDYDRRADKPWTKLTPADKAAIRKELNEFKSSEMEVHVDSKHFTRYHRP</sequence>
<comment type="function">
    <text evidence="3 4">Regulator of protein phosphatase 1 (PP1) required for neural tube and optic fissure closure, and enteric neural crest cell (ENCCs) migration during development. Acts as an activator of PP1 by interacting with PPP1CA and preventing phosphorylation of PPP1CA at 'Thr-320'. During neural tube closure, localizes to the ventral neural tube and activates PP1, leading to down-regulate cell proliferation within cranial neural tissue and the neural retina. Also acts as a regulator of migration of enteric neural crest cells (ENCCs) by activating PP1, leading to dephosphorylation and subsequent activation of cofilin (COF1 or COF2) and repression of the integrin signaling through the RHO/ROCK pathway.</text>
</comment>
<comment type="subunit">
    <text>Binds PPP1CA and actin.</text>
</comment>
<comment type="subcellular location">
    <subcellularLocation>
        <location>Cytoplasm</location>
    </subcellularLocation>
    <subcellularLocation>
        <location>Cell projection</location>
        <location>Lamellipodium</location>
    </subcellularLocation>
</comment>
<comment type="alternative products">
    <event type="alternative splicing"/>
    <isoform>
        <id>Q501J7-1</id>
        <name>1</name>
        <sequence type="displayed"/>
    </isoform>
    <isoform>
        <id>Q501J7-2</id>
        <name>2</name>
        <sequence type="described" ref="VSP_025440"/>
    </isoform>
    <isoform>
        <id>Q501J7-3</id>
        <name>3</name>
        <sequence type="described" ref="VSP_025439"/>
    </isoform>
</comment>
<comment type="developmental stage">
    <text evidence="3">During embryonic development, most strongly expressed in neural tissue. Expressed in a dynamic pattern during neurulation: from 8.5 dpc to 9.5 dpc, the period of cranial neural closure and spatially regulated proliferation, it is expressed strongly in the ventral region of the cranial neural tube. By 10.5 dpc, expressed more uniformly along the dorsal and ventral aspects of the cranial neural tube. Also expressed in the neural retina and lens.</text>
</comment>
<comment type="disruption phenotype">
    <text evidence="3 4">Neural tube and eye defects in embryos followed by death. By 9.25 dpc, mutant embryos show failure to close the cranial neural tube. About 15% of homozygous mutant embryos exhibit severe exencephaly, along with a wavy spinal neural tube and a shortened anterior/posterior body axis, and die around 10.5 dpc. Remaining embryos exhibit complete exencephaly from the forebrain to hindbrain. Most embryos die by 14.5 dpc, but a few survive to birth and die shortly thereafter. Embryos also have eye defects: they display overgrowth of the neural retina and retinal pigment epithelium. Embryos also display coloboma at 12.5 dpc and 16.5 dpc, due to defects in closure of optic fissure. Defects are due to elevated proliferation and abnormally phosphorylated, inactive PP1, resulting in RB1 hyperphosphorylation, derepression of E2F targets, and abnormal cell-cycle progression. Embryos also show embryonic gastrointestinal defects due to colon hypoganglionosis, which resembles human Hirschsprung disease: ENCCs within the embryonic gut display a collective cell migration defect and show undirected cellular protrusions and disrupted directional and chain migration.</text>
</comment>
<comment type="similarity">
    <text evidence="6">Belongs to the phosphatase and actin regulator family.</text>
</comment>
<comment type="sequence caution" evidence="6">
    <conflict type="erroneous initiation">
        <sequence resource="EMBL-CDS" id="BAD90294"/>
    </conflict>
    <text>Extended N-terminus.</text>
</comment>
<comment type="sequence caution" evidence="6">
    <conflict type="erroneous gene model prediction">
        <sequence resource="EMBL-CDS" id="CAM26520"/>
    </conflict>
</comment>
<reference key="1">
    <citation type="journal article" date="2005" name="Science">
        <title>The transcriptional landscape of the mammalian genome.</title>
        <authorList>
            <person name="Carninci P."/>
            <person name="Kasukawa T."/>
            <person name="Katayama S."/>
            <person name="Gough J."/>
            <person name="Frith M.C."/>
            <person name="Maeda N."/>
            <person name="Oyama R."/>
            <person name="Ravasi T."/>
            <person name="Lenhard B."/>
            <person name="Wells C."/>
            <person name="Kodzius R."/>
            <person name="Shimokawa K."/>
            <person name="Bajic V.B."/>
            <person name="Brenner S.E."/>
            <person name="Batalov S."/>
            <person name="Forrest A.R."/>
            <person name="Zavolan M."/>
            <person name="Davis M.J."/>
            <person name="Wilming L.G."/>
            <person name="Aidinis V."/>
            <person name="Allen J.E."/>
            <person name="Ambesi-Impiombato A."/>
            <person name="Apweiler R."/>
            <person name="Aturaliya R.N."/>
            <person name="Bailey T.L."/>
            <person name="Bansal M."/>
            <person name="Baxter L."/>
            <person name="Beisel K.W."/>
            <person name="Bersano T."/>
            <person name="Bono H."/>
            <person name="Chalk A.M."/>
            <person name="Chiu K.P."/>
            <person name="Choudhary V."/>
            <person name="Christoffels A."/>
            <person name="Clutterbuck D.R."/>
            <person name="Crowe M.L."/>
            <person name="Dalla E."/>
            <person name="Dalrymple B.P."/>
            <person name="de Bono B."/>
            <person name="Della Gatta G."/>
            <person name="di Bernardo D."/>
            <person name="Down T."/>
            <person name="Engstrom P."/>
            <person name="Fagiolini M."/>
            <person name="Faulkner G."/>
            <person name="Fletcher C.F."/>
            <person name="Fukushima T."/>
            <person name="Furuno M."/>
            <person name="Futaki S."/>
            <person name="Gariboldi M."/>
            <person name="Georgii-Hemming P."/>
            <person name="Gingeras T.R."/>
            <person name="Gojobori T."/>
            <person name="Green R.E."/>
            <person name="Gustincich S."/>
            <person name="Harbers M."/>
            <person name="Hayashi Y."/>
            <person name="Hensch T.K."/>
            <person name="Hirokawa N."/>
            <person name="Hill D."/>
            <person name="Huminiecki L."/>
            <person name="Iacono M."/>
            <person name="Ikeo K."/>
            <person name="Iwama A."/>
            <person name="Ishikawa T."/>
            <person name="Jakt M."/>
            <person name="Kanapin A."/>
            <person name="Katoh M."/>
            <person name="Kawasawa Y."/>
            <person name="Kelso J."/>
            <person name="Kitamura H."/>
            <person name="Kitano H."/>
            <person name="Kollias G."/>
            <person name="Krishnan S.P."/>
            <person name="Kruger A."/>
            <person name="Kummerfeld S.K."/>
            <person name="Kurochkin I.V."/>
            <person name="Lareau L.F."/>
            <person name="Lazarevic D."/>
            <person name="Lipovich L."/>
            <person name="Liu J."/>
            <person name="Liuni S."/>
            <person name="McWilliam S."/>
            <person name="Madan Babu M."/>
            <person name="Madera M."/>
            <person name="Marchionni L."/>
            <person name="Matsuda H."/>
            <person name="Matsuzawa S."/>
            <person name="Miki H."/>
            <person name="Mignone F."/>
            <person name="Miyake S."/>
            <person name="Morris K."/>
            <person name="Mottagui-Tabar S."/>
            <person name="Mulder N."/>
            <person name="Nakano N."/>
            <person name="Nakauchi H."/>
            <person name="Ng P."/>
            <person name="Nilsson R."/>
            <person name="Nishiguchi S."/>
            <person name="Nishikawa S."/>
            <person name="Nori F."/>
            <person name="Ohara O."/>
            <person name="Okazaki Y."/>
            <person name="Orlando V."/>
            <person name="Pang K.C."/>
            <person name="Pavan W.J."/>
            <person name="Pavesi G."/>
            <person name="Pesole G."/>
            <person name="Petrovsky N."/>
            <person name="Piazza S."/>
            <person name="Reed J."/>
            <person name="Reid J.F."/>
            <person name="Ring B.Z."/>
            <person name="Ringwald M."/>
            <person name="Rost B."/>
            <person name="Ruan Y."/>
            <person name="Salzberg S.L."/>
            <person name="Sandelin A."/>
            <person name="Schneider C."/>
            <person name="Schoenbach C."/>
            <person name="Sekiguchi K."/>
            <person name="Semple C.A."/>
            <person name="Seno S."/>
            <person name="Sessa L."/>
            <person name="Sheng Y."/>
            <person name="Shibata Y."/>
            <person name="Shimada H."/>
            <person name="Shimada K."/>
            <person name="Silva D."/>
            <person name="Sinclair B."/>
            <person name="Sperling S."/>
            <person name="Stupka E."/>
            <person name="Sugiura K."/>
            <person name="Sultana R."/>
            <person name="Takenaka Y."/>
            <person name="Taki K."/>
            <person name="Tammoja K."/>
            <person name="Tan S.L."/>
            <person name="Tang S."/>
            <person name="Taylor M.S."/>
            <person name="Tegner J."/>
            <person name="Teichmann S.A."/>
            <person name="Ueda H.R."/>
            <person name="van Nimwegen E."/>
            <person name="Verardo R."/>
            <person name="Wei C.L."/>
            <person name="Yagi K."/>
            <person name="Yamanishi H."/>
            <person name="Zabarovsky E."/>
            <person name="Zhu S."/>
            <person name="Zimmer A."/>
            <person name="Hide W."/>
            <person name="Bult C."/>
            <person name="Grimmond S.M."/>
            <person name="Teasdale R.D."/>
            <person name="Liu E.T."/>
            <person name="Brusic V."/>
            <person name="Quackenbush J."/>
            <person name="Wahlestedt C."/>
            <person name="Mattick J.S."/>
            <person name="Hume D.A."/>
            <person name="Kai C."/>
            <person name="Sasaki D."/>
            <person name="Tomaru Y."/>
            <person name="Fukuda S."/>
            <person name="Kanamori-Katayama M."/>
            <person name="Suzuki M."/>
            <person name="Aoki J."/>
            <person name="Arakawa T."/>
            <person name="Iida J."/>
            <person name="Imamura K."/>
            <person name="Itoh M."/>
            <person name="Kato T."/>
            <person name="Kawaji H."/>
            <person name="Kawagashira N."/>
            <person name="Kawashima T."/>
            <person name="Kojima M."/>
            <person name="Kondo S."/>
            <person name="Konno H."/>
            <person name="Nakano K."/>
            <person name="Ninomiya N."/>
            <person name="Nishio T."/>
            <person name="Okada M."/>
            <person name="Plessy C."/>
            <person name="Shibata K."/>
            <person name="Shiraki T."/>
            <person name="Suzuki S."/>
            <person name="Tagami M."/>
            <person name="Waki K."/>
            <person name="Watahiki A."/>
            <person name="Okamura-Oho Y."/>
            <person name="Suzuki H."/>
            <person name="Kawai J."/>
            <person name="Hayashizaki Y."/>
        </authorList>
    </citation>
    <scope>NUCLEOTIDE SEQUENCE [LARGE SCALE MRNA] (ISOFORM 1)</scope>
    <source>
        <strain>C57BL/6J</strain>
    </source>
</reference>
<reference key="2">
    <citation type="submission" date="2005-02" db="EMBL/GenBank/DDBJ databases">
        <title>Prediction of the coding sequences of mouse homologues of KIAA gene. The complete nucleotide sequences of mouse KIAA-homologous cDNAs identified by screening of terminal sequences of cDNA clones randomly sampled from size-fractionated libraries.</title>
        <authorList>
            <person name="Okazaki N."/>
            <person name="Kikuno R.F."/>
            <person name="Ohara R."/>
            <person name="Inamoto S."/>
            <person name="Nagase T."/>
            <person name="Ohara O."/>
            <person name="Koga H."/>
        </authorList>
    </citation>
    <scope>NUCLEOTIDE SEQUENCE [LARGE SCALE MRNA] (ISOFORM 2)</scope>
    <source>
        <tissue>Fetal brain</tissue>
    </source>
</reference>
<reference key="3">
    <citation type="journal article" date="2009" name="PLoS Biol.">
        <title>Lineage-specific biology revealed by a finished genome assembly of the mouse.</title>
        <authorList>
            <person name="Church D.M."/>
            <person name="Goodstadt L."/>
            <person name="Hillier L.W."/>
            <person name="Zody M.C."/>
            <person name="Goldstein S."/>
            <person name="She X."/>
            <person name="Bult C.J."/>
            <person name="Agarwala R."/>
            <person name="Cherry J.L."/>
            <person name="DiCuccio M."/>
            <person name="Hlavina W."/>
            <person name="Kapustin Y."/>
            <person name="Meric P."/>
            <person name="Maglott D."/>
            <person name="Birtle Z."/>
            <person name="Marques A.C."/>
            <person name="Graves T."/>
            <person name="Zhou S."/>
            <person name="Teague B."/>
            <person name="Potamousis K."/>
            <person name="Churas C."/>
            <person name="Place M."/>
            <person name="Herschleb J."/>
            <person name="Runnheim R."/>
            <person name="Forrest D."/>
            <person name="Amos-Landgraf J."/>
            <person name="Schwartz D.C."/>
            <person name="Cheng Z."/>
            <person name="Lindblad-Toh K."/>
            <person name="Eichler E.E."/>
            <person name="Ponting C.P."/>
        </authorList>
    </citation>
    <scope>NUCLEOTIDE SEQUENCE [LARGE SCALE GENOMIC DNA]</scope>
    <source>
        <strain>C57BL/6J</strain>
    </source>
</reference>
<reference key="4">
    <citation type="journal article" date="2004" name="Genome Res.">
        <title>The status, quality, and expansion of the NIH full-length cDNA project: the Mammalian Gene Collection (MGC).</title>
        <authorList>
            <consortium name="The MGC Project Team"/>
        </authorList>
    </citation>
    <scope>NUCLEOTIDE SEQUENCE [LARGE SCALE MRNA] (ISOFORM 1)</scope>
    <source>
        <strain>C57BL/6J</strain>
        <tissue>Brain</tissue>
        <tissue>Eye</tissue>
    </source>
</reference>
<reference key="5">
    <citation type="journal article" date="2004" name="Proc. Natl. Acad. Sci. U.S.A.">
        <title>Phactrs 1-4: a family of protein phosphatase 1 and actin regulatory proteins.</title>
        <authorList>
            <person name="Allen P.B."/>
            <person name="Greenfield A.T."/>
            <person name="Svenningsson P."/>
            <person name="Haspeslagh D.C."/>
            <person name="Greengard P."/>
        </authorList>
    </citation>
    <scope>IDENTIFICATION</scope>
</reference>
<reference key="6">
    <citation type="journal article" date="2007" name="Dev. Cell">
        <title>Phactr4 regulates neural tube and optic fissure closure by controlling PP1-, Rb-, and E2F1-regulated cell-cycle progression.</title>
        <authorList>
            <person name="Kim T.H."/>
            <person name="Goodman J."/>
            <person name="Anderson K.V."/>
            <person name="Niswander L."/>
        </authorList>
    </citation>
    <scope>FUNCTION</scope>
    <scope>SUBCELLULAR LOCATION</scope>
    <scope>DISRUPTION PHENOTYPE</scope>
    <scope>INTERACTION WITH PPP1CA AND ACTIN</scope>
    <scope>TISSUE SPECIFICITY</scope>
    <scope>DEVELOPMENTAL STAGE</scope>
    <scope>MUTAGENESIS OF ARG-650</scope>
</reference>
<reference key="7">
    <citation type="journal article" date="2007" name="Proc. Natl. Acad. Sci. U.S.A.">
        <title>Large-scale phosphorylation analysis of mouse liver.</title>
        <authorList>
            <person name="Villen J."/>
            <person name="Beausoleil S.A."/>
            <person name="Gerber S.A."/>
            <person name="Gygi S.P."/>
        </authorList>
    </citation>
    <scope>PHOSPHORYLATION [LARGE SCALE ANALYSIS] AT SER-118 AND SER-436</scope>
    <scope>IDENTIFICATION BY MASS SPECTROMETRY [LARGE SCALE ANALYSIS]</scope>
    <source>
        <tissue>Liver</tissue>
    </source>
</reference>
<reference key="8">
    <citation type="journal article" date="2009" name="Immunity">
        <title>The phagosomal proteome in interferon-gamma-activated macrophages.</title>
        <authorList>
            <person name="Trost M."/>
            <person name="English L."/>
            <person name="Lemieux S."/>
            <person name="Courcelles M."/>
            <person name="Desjardins M."/>
            <person name="Thibault P."/>
        </authorList>
    </citation>
    <scope>IDENTIFICATION BY MASS SPECTROMETRY [LARGE SCALE ANALYSIS]</scope>
</reference>
<reference key="9">
    <citation type="journal article" date="2010" name="Cell">
        <title>A tissue-specific atlas of mouse protein phosphorylation and expression.</title>
        <authorList>
            <person name="Huttlin E.L."/>
            <person name="Jedrychowski M.P."/>
            <person name="Elias J.E."/>
            <person name="Goswami T."/>
            <person name="Rad R."/>
            <person name="Beausoleil S.A."/>
            <person name="Villen J."/>
            <person name="Haas W."/>
            <person name="Sowa M.E."/>
            <person name="Gygi S.P."/>
        </authorList>
    </citation>
    <scope>PHOSPHORYLATION [LARGE SCALE ANALYSIS] AT SER-116; SER-118; SER-264; SER-285; SER-420; THR-425; SER-436; SER-446; SER-457; SER-503 AND SER-505</scope>
    <scope>IDENTIFICATION BY MASS SPECTROMETRY [LARGE SCALE ANALYSIS]</scope>
    <source>
        <tissue>Brain</tissue>
        <tissue>Brown adipose tissue</tissue>
        <tissue>Heart</tissue>
        <tissue>Kidney</tissue>
        <tissue>Liver</tissue>
        <tissue>Lung</tissue>
        <tissue>Pancreas</tissue>
        <tissue>Spleen</tissue>
        <tissue>Testis</tissue>
    </source>
</reference>
<reference key="10">
    <citation type="journal article" date="2012" name="Genes Dev.">
        <title>Phactr4 regulates directional migration of enteric neural crest through PP1, integrin signaling, and cofilin activity.</title>
        <authorList>
            <person name="Zhang Y."/>
            <person name="Kim T.H."/>
            <person name="Niswander L."/>
        </authorList>
    </citation>
    <scope>FUNCTION</scope>
    <scope>SUBCELLULAR LOCATION</scope>
    <scope>DISRUPTION PHENOTYPE</scope>
</reference>
<proteinExistence type="evidence at protein level"/>
<gene>
    <name type="primary">Phactr4</name>
    <name type="synonym">Kiaa4120</name>
</gene>